<proteinExistence type="inferred from homology"/>
<dbReference type="EC" id="3.2.2.23" evidence="2"/>
<dbReference type="EC" id="4.2.99.18" evidence="2"/>
<dbReference type="EMBL" id="AM743169">
    <property type="protein sequence ID" value="CAQ43701.1"/>
    <property type="molecule type" value="Genomic_DNA"/>
</dbReference>
<dbReference type="RefSeq" id="WP_005407488.1">
    <property type="nucleotide sequence ID" value="NC_010943.1"/>
</dbReference>
<dbReference type="SMR" id="B2FU49"/>
<dbReference type="EnsemblBacteria" id="CAQ43701">
    <property type="protein sequence ID" value="CAQ43701"/>
    <property type="gene ID" value="Smlt0090"/>
</dbReference>
<dbReference type="KEGG" id="sml:Smlt0090"/>
<dbReference type="eggNOG" id="COG0266">
    <property type="taxonomic scope" value="Bacteria"/>
</dbReference>
<dbReference type="HOGENOM" id="CLU_038423_1_1_6"/>
<dbReference type="Proteomes" id="UP000008840">
    <property type="component" value="Chromosome"/>
</dbReference>
<dbReference type="GO" id="GO:0034039">
    <property type="term" value="F:8-oxo-7,8-dihydroguanine DNA N-glycosylase activity"/>
    <property type="evidence" value="ECO:0007669"/>
    <property type="project" value="TreeGrafter"/>
</dbReference>
<dbReference type="GO" id="GO:0140078">
    <property type="term" value="F:class I DNA-(apurinic or apyrimidinic site) endonuclease activity"/>
    <property type="evidence" value="ECO:0007669"/>
    <property type="project" value="UniProtKB-EC"/>
</dbReference>
<dbReference type="GO" id="GO:0003684">
    <property type="term" value="F:damaged DNA binding"/>
    <property type="evidence" value="ECO:0007669"/>
    <property type="project" value="InterPro"/>
</dbReference>
<dbReference type="GO" id="GO:0008270">
    <property type="term" value="F:zinc ion binding"/>
    <property type="evidence" value="ECO:0007669"/>
    <property type="project" value="UniProtKB-UniRule"/>
</dbReference>
<dbReference type="GO" id="GO:0006284">
    <property type="term" value="P:base-excision repair"/>
    <property type="evidence" value="ECO:0007669"/>
    <property type="project" value="InterPro"/>
</dbReference>
<dbReference type="CDD" id="cd08966">
    <property type="entry name" value="EcFpg-like_N"/>
    <property type="match status" value="1"/>
</dbReference>
<dbReference type="FunFam" id="1.10.8.50:FF:000003">
    <property type="entry name" value="Formamidopyrimidine-DNA glycosylase"/>
    <property type="match status" value="1"/>
</dbReference>
<dbReference type="FunFam" id="3.20.190.10:FF:000001">
    <property type="entry name" value="Formamidopyrimidine-DNA glycosylase"/>
    <property type="match status" value="1"/>
</dbReference>
<dbReference type="Gene3D" id="1.10.8.50">
    <property type="match status" value="1"/>
</dbReference>
<dbReference type="Gene3D" id="3.20.190.10">
    <property type="entry name" value="MutM-like, N-terminal"/>
    <property type="match status" value="1"/>
</dbReference>
<dbReference type="HAMAP" id="MF_00103">
    <property type="entry name" value="Fapy_DNA_glycosyl"/>
    <property type="match status" value="1"/>
</dbReference>
<dbReference type="InterPro" id="IPR015886">
    <property type="entry name" value="DNA_glyclase/AP_lyase_DNA-bd"/>
</dbReference>
<dbReference type="InterPro" id="IPR015887">
    <property type="entry name" value="DNA_glyclase_Znf_dom_DNA_BS"/>
</dbReference>
<dbReference type="InterPro" id="IPR020629">
    <property type="entry name" value="Formamido-pyr_DNA_Glyclase"/>
</dbReference>
<dbReference type="InterPro" id="IPR012319">
    <property type="entry name" value="FPG_cat"/>
</dbReference>
<dbReference type="InterPro" id="IPR035937">
    <property type="entry name" value="MutM-like_N-ter"/>
</dbReference>
<dbReference type="InterPro" id="IPR010979">
    <property type="entry name" value="Ribosomal_uS13-like_H2TH"/>
</dbReference>
<dbReference type="InterPro" id="IPR000214">
    <property type="entry name" value="Znf_DNA_glyclase/AP_lyase"/>
</dbReference>
<dbReference type="InterPro" id="IPR010663">
    <property type="entry name" value="Znf_FPG/IleRS"/>
</dbReference>
<dbReference type="NCBIfam" id="TIGR00577">
    <property type="entry name" value="fpg"/>
    <property type="match status" value="1"/>
</dbReference>
<dbReference type="NCBIfam" id="NF002211">
    <property type="entry name" value="PRK01103.1"/>
    <property type="match status" value="1"/>
</dbReference>
<dbReference type="PANTHER" id="PTHR22993">
    <property type="entry name" value="FORMAMIDOPYRIMIDINE-DNA GLYCOSYLASE"/>
    <property type="match status" value="1"/>
</dbReference>
<dbReference type="PANTHER" id="PTHR22993:SF9">
    <property type="entry name" value="FORMAMIDOPYRIMIDINE-DNA GLYCOSYLASE"/>
    <property type="match status" value="1"/>
</dbReference>
<dbReference type="Pfam" id="PF01149">
    <property type="entry name" value="Fapy_DNA_glyco"/>
    <property type="match status" value="1"/>
</dbReference>
<dbReference type="Pfam" id="PF06831">
    <property type="entry name" value="H2TH"/>
    <property type="match status" value="1"/>
</dbReference>
<dbReference type="Pfam" id="PF06827">
    <property type="entry name" value="zf-FPG_IleRS"/>
    <property type="match status" value="1"/>
</dbReference>
<dbReference type="SMART" id="SM00898">
    <property type="entry name" value="Fapy_DNA_glyco"/>
    <property type="match status" value="1"/>
</dbReference>
<dbReference type="SMART" id="SM01232">
    <property type="entry name" value="H2TH"/>
    <property type="match status" value="1"/>
</dbReference>
<dbReference type="SUPFAM" id="SSF57716">
    <property type="entry name" value="Glucocorticoid receptor-like (DNA-binding domain)"/>
    <property type="match status" value="1"/>
</dbReference>
<dbReference type="SUPFAM" id="SSF81624">
    <property type="entry name" value="N-terminal domain of MutM-like DNA repair proteins"/>
    <property type="match status" value="1"/>
</dbReference>
<dbReference type="SUPFAM" id="SSF46946">
    <property type="entry name" value="S13-like H2TH domain"/>
    <property type="match status" value="1"/>
</dbReference>
<dbReference type="PROSITE" id="PS51068">
    <property type="entry name" value="FPG_CAT"/>
    <property type="match status" value="1"/>
</dbReference>
<dbReference type="PROSITE" id="PS01242">
    <property type="entry name" value="ZF_FPG_1"/>
    <property type="match status" value="1"/>
</dbReference>
<dbReference type="PROSITE" id="PS51066">
    <property type="entry name" value="ZF_FPG_2"/>
    <property type="match status" value="1"/>
</dbReference>
<protein>
    <recommendedName>
        <fullName evidence="2">Formamidopyrimidine-DNA glycosylase</fullName>
        <shortName evidence="2">Fapy-DNA glycosylase</shortName>
        <ecNumber evidence="2">3.2.2.23</ecNumber>
    </recommendedName>
    <alternativeName>
        <fullName evidence="2">DNA-(apurinic or apyrimidinic site) lyase MutM</fullName>
        <shortName evidence="2">AP lyase MutM</shortName>
        <ecNumber evidence="2">4.2.99.18</ecNumber>
    </alternativeName>
</protein>
<keyword id="KW-0227">DNA damage</keyword>
<keyword id="KW-0234">DNA repair</keyword>
<keyword id="KW-0238">DNA-binding</keyword>
<keyword id="KW-0326">Glycosidase</keyword>
<keyword id="KW-0378">Hydrolase</keyword>
<keyword id="KW-0456">Lyase</keyword>
<keyword id="KW-0479">Metal-binding</keyword>
<keyword id="KW-0511">Multifunctional enzyme</keyword>
<keyword id="KW-1185">Reference proteome</keyword>
<keyword id="KW-0862">Zinc</keyword>
<keyword id="KW-0863">Zinc-finger</keyword>
<gene>
    <name evidence="2" type="primary">mutM</name>
    <name evidence="2" type="synonym">fpg</name>
    <name type="ordered locus">Smlt0090</name>
</gene>
<evidence type="ECO:0000250" key="1"/>
<evidence type="ECO:0000255" key="2">
    <source>
        <dbReference type="HAMAP-Rule" id="MF_00103"/>
    </source>
</evidence>
<accession>B2FU49</accession>
<reference key="1">
    <citation type="journal article" date="2008" name="Genome Biol.">
        <title>The complete genome, comparative and functional analysis of Stenotrophomonas maltophilia reveals an organism heavily shielded by drug resistance determinants.</title>
        <authorList>
            <person name="Crossman L.C."/>
            <person name="Gould V.C."/>
            <person name="Dow J.M."/>
            <person name="Vernikos G.S."/>
            <person name="Okazaki A."/>
            <person name="Sebaihia M."/>
            <person name="Saunders D."/>
            <person name="Arrowsmith C."/>
            <person name="Carver T."/>
            <person name="Peters N."/>
            <person name="Adlem E."/>
            <person name="Kerhornou A."/>
            <person name="Lord A."/>
            <person name="Murphy L."/>
            <person name="Seeger K."/>
            <person name="Squares R."/>
            <person name="Rutter S."/>
            <person name="Quail M.A."/>
            <person name="Rajandream M.A."/>
            <person name="Harris D."/>
            <person name="Churcher C."/>
            <person name="Bentley S.D."/>
            <person name="Parkhill J."/>
            <person name="Thomson N.R."/>
            <person name="Avison M.B."/>
        </authorList>
    </citation>
    <scope>NUCLEOTIDE SEQUENCE [LARGE SCALE GENOMIC DNA]</scope>
    <source>
        <strain>K279a</strain>
    </source>
</reference>
<feature type="initiator methionine" description="Removed" evidence="1">
    <location>
        <position position="1"/>
    </location>
</feature>
<feature type="chain" id="PRO_1000094082" description="Formamidopyrimidine-DNA glycosylase">
    <location>
        <begin position="2"/>
        <end position="270"/>
    </location>
</feature>
<feature type="zinc finger region" description="FPG-type" evidence="2">
    <location>
        <begin position="236"/>
        <end position="270"/>
    </location>
</feature>
<feature type="active site" description="Schiff-base intermediate with DNA" evidence="2">
    <location>
        <position position="2"/>
    </location>
</feature>
<feature type="active site" description="Proton donor" evidence="2">
    <location>
        <position position="3"/>
    </location>
</feature>
<feature type="active site" description="Proton donor; for beta-elimination activity" evidence="2">
    <location>
        <position position="58"/>
    </location>
</feature>
<feature type="active site" description="Proton donor; for delta-elimination activity" evidence="2">
    <location>
        <position position="260"/>
    </location>
</feature>
<feature type="binding site" evidence="2">
    <location>
        <position position="91"/>
    </location>
    <ligand>
        <name>DNA</name>
        <dbReference type="ChEBI" id="CHEBI:16991"/>
    </ligand>
</feature>
<feature type="binding site" evidence="2">
    <location>
        <position position="110"/>
    </location>
    <ligand>
        <name>DNA</name>
        <dbReference type="ChEBI" id="CHEBI:16991"/>
    </ligand>
</feature>
<feature type="binding site" evidence="2">
    <location>
        <position position="151"/>
    </location>
    <ligand>
        <name>DNA</name>
        <dbReference type="ChEBI" id="CHEBI:16991"/>
    </ligand>
</feature>
<name>FPG_STRMK</name>
<organism>
    <name type="scientific">Stenotrophomonas maltophilia (strain K279a)</name>
    <dbReference type="NCBI Taxonomy" id="522373"/>
    <lineage>
        <taxon>Bacteria</taxon>
        <taxon>Pseudomonadati</taxon>
        <taxon>Pseudomonadota</taxon>
        <taxon>Gammaproteobacteria</taxon>
        <taxon>Lysobacterales</taxon>
        <taxon>Lysobacteraceae</taxon>
        <taxon>Stenotrophomonas</taxon>
        <taxon>Stenotrophomonas maltophilia group</taxon>
    </lineage>
</organism>
<comment type="function">
    <text evidence="2">Involved in base excision repair of DNA damaged by oxidation or by mutagenic agents. Acts as a DNA glycosylase that recognizes and removes damaged bases. Has a preference for oxidized purines, such as 7,8-dihydro-8-oxoguanine (8-oxoG). Has AP (apurinic/apyrimidinic) lyase activity and introduces nicks in the DNA strand. Cleaves the DNA backbone by beta-delta elimination to generate a single-strand break at the site of the removed base with both 3'- and 5'-phosphates.</text>
</comment>
<comment type="catalytic activity">
    <reaction evidence="2">
        <text>Hydrolysis of DNA containing ring-opened 7-methylguanine residues, releasing 2,6-diamino-4-hydroxy-5-(N-methyl)formamidopyrimidine.</text>
        <dbReference type="EC" id="3.2.2.23"/>
    </reaction>
</comment>
<comment type="catalytic activity">
    <reaction evidence="2">
        <text>2'-deoxyribonucleotide-(2'-deoxyribose 5'-phosphate)-2'-deoxyribonucleotide-DNA = a 3'-end 2'-deoxyribonucleotide-(2,3-dehydro-2,3-deoxyribose 5'-phosphate)-DNA + a 5'-end 5'-phospho-2'-deoxyribonucleoside-DNA + H(+)</text>
        <dbReference type="Rhea" id="RHEA:66592"/>
        <dbReference type="Rhea" id="RHEA-COMP:13180"/>
        <dbReference type="Rhea" id="RHEA-COMP:16897"/>
        <dbReference type="Rhea" id="RHEA-COMP:17067"/>
        <dbReference type="ChEBI" id="CHEBI:15378"/>
        <dbReference type="ChEBI" id="CHEBI:136412"/>
        <dbReference type="ChEBI" id="CHEBI:157695"/>
        <dbReference type="ChEBI" id="CHEBI:167181"/>
        <dbReference type="EC" id="4.2.99.18"/>
    </reaction>
</comment>
<comment type="cofactor">
    <cofactor evidence="2">
        <name>Zn(2+)</name>
        <dbReference type="ChEBI" id="CHEBI:29105"/>
    </cofactor>
    <text evidence="2">Binds 1 zinc ion per subunit.</text>
</comment>
<comment type="subunit">
    <text evidence="2">Monomer.</text>
</comment>
<comment type="similarity">
    <text evidence="2">Belongs to the FPG family.</text>
</comment>
<sequence length="270" mass="29862">MPELPEVETTRRGLAPHLQGRRVHGVILRRADLRWPIPPEVAELLPGQRIEDIRRRAKYLLLDTAIGSAVLHLGMSGSLRVLPGDTPLRAHDHVDISLDNGRLLRFNDPRRFGSLLWQPAGEVHPLLQGLGPEPLDDAFDGDYLFARSRGRSAPVKTFLMDQAVVVGVGNIYAAESLFKAGISPLREAGKISRERYQRLADAVKEILGYAITRGGTTLRDFISPDGAPGYFEQELLVYGRDGLPCPNCGRALKHATIGQRASVWCSHCQR</sequence>